<protein>
    <recommendedName>
        <fullName evidence="4">Chloroplast protein FOR GROWTH AND FERTILITY 1</fullName>
    </recommendedName>
</protein>
<evidence type="ECO:0000255" key="1"/>
<evidence type="ECO:0000256" key="2">
    <source>
        <dbReference type="SAM" id="MobiDB-lite"/>
    </source>
</evidence>
<evidence type="ECO:0000269" key="3">
    <source>
    </source>
</evidence>
<evidence type="ECO:0000303" key="4">
    <source>
    </source>
</evidence>
<evidence type="ECO:0000305" key="5"/>
<evidence type="ECO:0000312" key="6">
    <source>
        <dbReference type="Araport" id="AT4G35080"/>
    </source>
</evidence>
<evidence type="ECO:0000312" key="7">
    <source>
        <dbReference type="EMBL" id="CAA17779.1"/>
    </source>
</evidence>
<evidence type="ECO:0000312" key="8">
    <source>
        <dbReference type="EMBL" id="CAB80225.1"/>
    </source>
</evidence>
<name>CGF1_ARATH</name>
<gene>
    <name evidence="4" type="primary">CGF1</name>
    <name evidence="6" type="ordered locus">At4g35080</name>
    <name evidence="7" type="ORF">M4E13.135</name>
    <name evidence="8" type="ORF">T12J5.1</name>
</gene>
<proteinExistence type="evidence at transcript level"/>
<keyword id="KW-0025">Alternative splicing</keyword>
<keyword id="KW-0150">Chloroplast</keyword>
<keyword id="KW-0472">Membrane</keyword>
<keyword id="KW-0934">Plastid</keyword>
<keyword id="KW-1185">Reference proteome</keyword>
<keyword id="KW-0809">Transit peptide</keyword>
<keyword id="KW-0812">Transmembrane</keyword>
<keyword id="KW-1133">Transmembrane helix</keyword>
<comment type="function">
    <text evidence="3">Together with CGF2, essential protein which supports female gametogenesis and embryogenesis, probably by securing local energy supply.</text>
</comment>
<comment type="subcellular location">
    <subcellularLocation>
        <location evidence="3">Plastid</location>
        <location evidence="3">Chloroplast membrane</location>
        <topology evidence="1">Multi-pass membrane protein</topology>
    </subcellularLocation>
    <subcellularLocation>
        <location evidence="3">Plastid membrane</location>
        <topology evidence="1">Multi-pass membrane protein</topology>
    </subcellularLocation>
    <text evidence="3">Present in chloroplasts on green tissues as well as in plastids of roots and seeds.</text>
</comment>
<comment type="alternative products">
    <event type="alternative splicing"/>
    <isoform>
        <id>Q94A99-1</id>
        <name>1</name>
        <sequence type="displayed"/>
    </isoform>
    <isoform>
        <id>Q94A99-2</id>
        <name>2</name>
        <sequence type="described" ref="VSP_061628"/>
    </isoform>
</comment>
<comment type="tissue specificity">
    <text evidence="3">Mostly expressed in leaves and flowers, to a lower extent, in stems, roots, floral bud, inflorescence and siliques, and, barely, in seedlings.</text>
</comment>
<comment type="developmental stage">
    <text evidence="3">In flowers, strongly expressed in mature pollen and ovules.</text>
</comment>
<comment type="disruption phenotype">
    <text evidence="3">Various vegetative defects, including reduced leaf size, dwarfism, and abnormal cell death (PubMed:32306898). Plants lacking both CGF1 and CGF2 are impaired for female gametogenesis and embryogenesis, and have abnormal leaf morphology with yellow patches associated with an altered chloroplast integrity; this phenotype is rescued by sucrose treatment (PubMed:32306898).</text>
</comment>
<comment type="sequence caution" evidence="5">
    <conflict type="erroneous gene model prediction">
        <sequence resource="EMBL-CDS" id="CAA17779"/>
    </conflict>
</comment>
<comment type="sequence caution" evidence="5">
    <conflict type="erroneous gene model prediction">
        <sequence resource="EMBL-CDS" id="CAB80225"/>
    </conflict>
</comment>
<reference key="1">
    <citation type="journal article" date="1999" name="Nature">
        <title>Sequence and analysis of chromosome 4 of the plant Arabidopsis thaliana.</title>
        <authorList>
            <person name="Mayer K.F.X."/>
            <person name="Schueller C."/>
            <person name="Wambutt R."/>
            <person name="Murphy G."/>
            <person name="Volckaert G."/>
            <person name="Pohl T."/>
            <person name="Duesterhoeft A."/>
            <person name="Stiekema W."/>
            <person name="Entian K.-D."/>
            <person name="Terryn N."/>
            <person name="Harris B."/>
            <person name="Ansorge W."/>
            <person name="Brandt P."/>
            <person name="Grivell L.A."/>
            <person name="Rieger M."/>
            <person name="Weichselgartner M."/>
            <person name="de Simone V."/>
            <person name="Obermaier B."/>
            <person name="Mache R."/>
            <person name="Mueller M."/>
            <person name="Kreis M."/>
            <person name="Delseny M."/>
            <person name="Puigdomenech P."/>
            <person name="Watson M."/>
            <person name="Schmidtheini T."/>
            <person name="Reichert B."/>
            <person name="Portetelle D."/>
            <person name="Perez-Alonso M."/>
            <person name="Boutry M."/>
            <person name="Bancroft I."/>
            <person name="Vos P."/>
            <person name="Hoheisel J."/>
            <person name="Zimmermann W."/>
            <person name="Wedler H."/>
            <person name="Ridley P."/>
            <person name="Langham S.-A."/>
            <person name="McCullagh B."/>
            <person name="Bilham L."/>
            <person name="Robben J."/>
            <person name="van der Schueren J."/>
            <person name="Grymonprez B."/>
            <person name="Chuang Y.-J."/>
            <person name="Vandenbussche F."/>
            <person name="Braeken M."/>
            <person name="Weltjens I."/>
            <person name="Voet M."/>
            <person name="Bastiaens I."/>
            <person name="Aert R."/>
            <person name="Defoor E."/>
            <person name="Weitzenegger T."/>
            <person name="Bothe G."/>
            <person name="Ramsperger U."/>
            <person name="Hilbert H."/>
            <person name="Braun M."/>
            <person name="Holzer E."/>
            <person name="Brandt A."/>
            <person name="Peters S."/>
            <person name="van Staveren M."/>
            <person name="Dirkse W."/>
            <person name="Mooijman P."/>
            <person name="Klein Lankhorst R."/>
            <person name="Rose M."/>
            <person name="Hauf J."/>
            <person name="Koetter P."/>
            <person name="Berneiser S."/>
            <person name="Hempel S."/>
            <person name="Feldpausch M."/>
            <person name="Lamberth S."/>
            <person name="Van den Daele H."/>
            <person name="De Keyser A."/>
            <person name="Buysshaert C."/>
            <person name="Gielen J."/>
            <person name="Villarroel R."/>
            <person name="De Clercq R."/>
            <person name="van Montagu M."/>
            <person name="Rogers J."/>
            <person name="Cronin A."/>
            <person name="Quail M.A."/>
            <person name="Bray-Allen S."/>
            <person name="Clark L."/>
            <person name="Doggett J."/>
            <person name="Hall S."/>
            <person name="Kay M."/>
            <person name="Lennard N."/>
            <person name="McLay K."/>
            <person name="Mayes R."/>
            <person name="Pettett A."/>
            <person name="Rajandream M.A."/>
            <person name="Lyne M."/>
            <person name="Benes V."/>
            <person name="Rechmann S."/>
            <person name="Borkova D."/>
            <person name="Bloecker H."/>
            <person name="Scharfe M."/>
            <person name="Grimm M."/>
            <person name="Loehnert T.-H."/>
            <person name="Dose S."/>
            <person name="de Haan M."/>
            <person name="Maarse A.C."/>
            <person name="Schaefer M."/>
            <person name="Mueller-Auer S."/>
            <person name="Gabel C."/>
            <person name="Fuchs M."/>
            <person name="Fartmann B."/>
            <person name="Granderath K."/>
            <person name="Dauner D."/>
            <person name="Herzl A."/>
            <person name="Neumann S."/>
            <person name="Argiriou A."/>
            <person name="Vitale D."/>
            <person name="Liguori R."/>
            <person name="Piravandi E."/>
            <person name="Massenet O."/>
            <person name="Quigley F."/>
            <person name="Clabauld G."/>
            <person name="Muendlein A."/>
            <person name="Felber R."/>
            <person name="Schnabl S."/>
            <person name="Hiller R."/>
            <person name="Schmidt W."/>
            <person name="Lecharny A."/>
            <person name="Aubourg S."/>
            <person name="Chefdor F."/>
            <person name="Cooke R."/>
            <person name="Berger C."/>
            <person name="Monfort A."/>
            <person name="Casacuberta E."/>
            <person name="Gibbons T."/>
            <person name="Weber N."/>
            <person name="Vandenbol M."/>
            <person name="Bargues M."/>
            <person name="Terol J."/>
            <person name="Torres A."/>
            <person name="Perez-Perez A."/>
            <person name="Purnelle B."/>
            <person name="Bent E."/>
            <person name="Johnson S."/>
            <person name="Tacon D."/>
            <person name="Jesse T."/>
            <person name="Heijnen L."/>
            <person name="Schwarz S."/>
            <person name="Scholler P."/>
            <person name="Heber S."/>
            <person name="Francs P."/>
            <person name="Bielke C."/>
            <person name="Frishman D."/>
            <person name="Haase D."/>
            <person name="Lemcke K."/>
            <person name="Mewes H.-W."/>
            <person name="Stocker S."/>
            <person name="Zaccaria P."/>
            <person name="Bevan M."/>
            <person name="Wilson R.K."/>
            <person name="de la Bastide M."/>
            <person name="Habermann K."/>
            <person name="Parnell L."/>
            <person name="Dedhia N."/>
            <person name="Gnoj L."/>
            <person name="Schutz K."/>
            <person name="Huang E."/>
            <person name="Spiegel L."/>
            <person name="Sekhon M."/>
            <person name="Murray J."/>
            <person name="Sheet P."/>
            <person name="Cordes M."/>
            <person name="Abu-Threideh J."/>
            <person name="Stoneking T."/>
            <person name="Kalicki J."/>
            <person name="Graves T."/>
            <person name="Harmon G."/>
            <person name="Edwards J."/>
            <person name="Latreille P."/>
            <person name="Courtney L."/>
            <person name="Cloud J."/>
            <person name="Abbott A."/>
            <person name="Scott K."/>
            <person name="Johnson D."/>
            <person name="Minx P."/>
            <person name="Bentley D."/>
            <person name="Fulton B."/>
            <person name="Miller N."/>
            <person name="Greco T."/>
            <person name="Kemp K."/>
            <person name="Kramer J."/>
            <person name="Fulton L."/>
            <person name="Mardis E."/>
            <person name="Dante M."/>
            <person name="Pepin K."/>
            <person name="Hillier L.W."/>
            <person name="Nelson J."/>
            <person name="Spieth J."/>
            <person name="Ryan E."/>
            <person name="Andrews S."/>
            <person name="Geisel C."/>
            <person name="Layman D."/>
            <person name="Du H."/>
            <person name="Ali J."/>
            <person name="Berghoff A."/>
            <person name="Jones K."/>
            <person name="Drone K."/>
            <person name="Cotton M."/>
            <person name="Joshu C."/>
            <person name="Antonoiu B."/>
            <person name="Zidanic M."/>
            <person name="Strong C."/>
            <person name="Sun H."/>
            <person name="Lamar B."/>
            <person name="Yordan C."/>
            <person name="Ma P."/>
            <person name="Zhong J."/>
            <person name="Preston R."/>
            <person name="Vil D."/>
            <person name="Shekher M."/>
            <person name="Matero A."/>
            <person name="Shah R."/>
            <person name="Swaby I.K."/>
            <person name="O'Shaughnessy A."/>
            <person name="Rodriguez M."/>
            <person name="Hoffman J."/>
            <person name="Till S."/>
            <person name="Granat S."/>
            <person name="Shohdy N."/>
            <person name="Hasegawa A."/>
            <person name="Hameed A."/>
            <person name="Lodhi M."/>
            <person name="Johnson A."/>
            <person name="Chen E."/>
            <person name="Marra M.A."/>
            <person name="Martienssen R."/>
            <person name="McCombie W.R."/>
        </authorList>
    </citation>
    <scope>NUCLEOTIDE SEQUENCE [LARGE SCALE GENOMIC DNA]</scope>
    <source>
        <strain>cv. Columbia</strain>
    </source>
</reference>
<reference key="2">
    <citation type="journal article" date="2017" name="Plant J.">
        <title>Araport11: a complete reannotation of the Arabidopsis thaliana reference genome.</title>
        <authorList>
            <person name="Cheng C.Y."/>
            <person name="Krishnakumar V."/>
            <person name="Chan A.P."/>
            <person name="Thibaud-Nissen F."/>
            <person name="Schobel S."/>
            <person name="Town C.D."/>
        </authorList>
    </citation>
    <scope>GENOME REANNOTATION</scope>
    <source>
        <strain>cv. Columbia</strain>
    </source>
</reference>
<reference key="3">
    <citation type="journal article" date="2003" name="Science">
        <title>Empirical analysis of transcriptional activity in the Arabidopsis genome.</title>
        <authorList>
            <person name="Yamada K."/>
            <person name="Lim J."/>
            <person name="Dale J.M."/>
            <person name="Chen H."/>
            <person name="Shinn P."/>
            <person name="Palm C.J."/>
            <person name="Southwick A.M."/>
            <person name="Wu H.C."/>
            <person name="Kim C.J."/>
            <person name="Nguyen M."/>
            <person name="Pham P.K."/>
            <person name="Cheuk R.F."/>
            <person name="Karlin-Newmann G."/>
            <person name="Liu S.X."/>
            <person name="Lam B."/>
            <person name="Sakano H."/>
            <person name="Wu T."/>
            <person name="Yu G."/>
            <person name="Miranda M."/>
            <person name="Quach H.L."/>
            <person name="Tripp M."/>
            <person name="Chang C.H."/>
            <person name="Lee J.M."/>
            <person name="Toriumi M.J."/>
            <person name="Chan M.M."/>
            <person name="Tang C.C."/>
            <person name="Onodera C.S."/>
            <person name="Deng J.M."/>
            <person name="Akiyama K."/>
            <person name="Ansari Y."/>
            <person name="Arakawa T."/>
            <person name="Banh J."/>
            <person name="Banno F."/>
            <person name="Bowser L."/>
            <person name="Brooks S.Y."/>
            <person name="Carninci P."/>
            <person name="Chao Q."/>
            <person name="Choy N."/>
            <person name="Enju A."/>
            <person name="Goldsmith A.D."/>
            <person name="Gurjal M."/>
            <person name="Hansen N.F."/>
            <person name="Hayashizaki Y."/>
            <person name="Johnson-Hopson C."/>
            <person name="Hsuan V.W."/>
            <person name="Iida K."/>
            <person name="Karnes M."/>
            <person name="Khan S."/>
            <person name="Koesema E."/>
            <person name="Ishida J."/>
            <person name="Jiang P.X."/>
            <person name="Jones T."/>
            <person name="Kawai J."/>
            <person name="Kamiya A."/>
            <person name="Meyers C."/>
            <person name="Nakajima M."/>
            <person name="Narusaka M."/>
            <person name="Seki M."/>
            <person name="Sakurai T."/>
            <person name="Satou M."/>
            <person name="Tamse R."/>
            <person name="Vaysberg M."/>
            <person name="Wallender E.K."/>
            <person name="Wong C."/>
            <person name="Yamamura Y."/>
            <person name="Yuan S."/>
            <person name="Shinozaki K."/>
            <person name="Davis R.W."/>
            <person name="Theologis A."/>
            <person name="Ecker J.R."/>
        </authorList>
    </citation>
    <scope>NUCLEOTIDE SEQUENCE [LARGE SCALE MRNA] (ISOFORM 1)</scope>
    <source>
        <strain>cv. Columbia</strain>
    </source>
</reference>
<reference key="4">
    <citation type="journal article" date="2009" name="DNA Res.">
        <title>Analysis of multiple occurrences of alternative splicing events in Arabidopsis thaliana using novel sequenced full-length cDNAs.</title>
        <authorList>
            <person name="Iida K."/>
            <person name="Fukami-Kobayashi K."/>
            <person name="Toyoda A."/>
            <person name="Sakaki Y."/>
            <person name="Kobayashi M."/>
            <person name="Seki M."/>
            <person name="Shinozaki K."/>
        </authorList>
    </citation>
    <scope>NUCLEOTIDE SEQUENCE [LARGE SCALE MRNA] (ISOFORM 2)</scope>
    <source>
        <strain>cv. Columbia</strain>
    </source>
</reference>
<reference key="5">
    <citation type="journal article" date="2020" name="BMC Plant Biol.">
        <title>Arabidopsis Chloroplast protein for Growth and Fertility1 (CGF1) and CGF2 are essential for chloroplast development and female gametogenesis.</title>
        <authorList>
            <person name="Zhu R.-M."/>
            <person name="Chai S."/>
            <person name="Zhang Z.-Z."/>
            <person name="Ma C.-L."/>
            <person name="Zhang Y."/>
            <person name="Li S."/>
        </authorList>
    </citation>
    <scope>FUNCTION</scope>
    <scope>DISRUPTION PHENOTYPE</scope>
    <scope>TISSUE SPECIFICITY</scope>
    <scope>DEVELOPMENTAL STAGE</scope>
    <scope>SUBCELLULAR LOCATION</scope>
    <source>
        <strain>cv. Columbia</strain>
    </source>
</reference>
<feature type="transit peptide" description="Chloroplast" evidence="1">
    <location>
        <begin position="1"/>
        <end position="79"/>
    </location>
</feature>
<feature type="chain" id="PRO_0000456462" description="Chloroplast protein FOR GROWTH AND FERTILITY 1">
    <location>
        <begin position="80"/>
        <end position="365"/>
    </location>
</feature>
<feature type="transmembrane region" description="Helical" evidence="1">
    <location>
        <begin position="109"/>
        <end position="129"/>
    </location>
</feature>
<feature type="transmembrane region" description="Helical" evidence="1">
    <location>
        <begin position="139"/>
        <end position="159"/>
    </location>
</feature>
<feature type="transmembrane region" description="Helical" evidence="1">
    <location>
        <begin position="182"/>
        <end position="202"/>
    </location>
</feature>
<feature type="transmembrane region" description="Helical" evidence="1">
    <location>
        <begin position="218"/>
        <end position="238"/>
    </location>
</feature>
<feature type="transmembrane region" description="Helical" evidence="1">
    <location>
        <begin position="274"/>
        <end position="294"/>
    </location>
</feature>
<feature type="transmembrane region" description="Helical" evidence="1">
    <location>
        <begin position="301"/>
        <end position="321"/>
    </location>
</feature>
<feature type="transmembrane region" description="Helical" evidence="1">
    <location>
        <begin position="345"/>
        <end position="365"/>
    </location>
</feature>
<feature type="region of interest" description="Disordered" evidence="2">
    <location>
        <begin position="1"/>
        <end position="30"/>
    </location>
</feature>
<feature type="region of interest" description="Disordered" evidence="2">
    <location>
        <begin position="62"/>
        <end position="90"/>
    </location>
</feature>
<feature type="compositionally biased region" description="Low complexity" evidence="2">
    <location>
        <begin position="7"/>
        <end position="24"/>
    </location>
</feature>
<feature type="compositionally biased region" description="Low complexity" evidence="2">
    <location>
        <begin position="62"/>
        <end position="77"/>
    </location>
</feature>
<feature type="splice variant" id="VSP_061628" description="In isoform 2.">
    <location>
        <begin position="297"/>
        <end position="325"/>
    </location>
</feature>
<feature type="sequence conflict" description="In Ref. 4; BAH19680." evidence="5" ref="4">
    <original>S</original>
    <variation>P</variation>
    <location>
        <position position="252"/>
    </location>
</feature>
<organism>
    <name type="scientific">Arabidopsis thaliana</name>
    <name type="common">Mouse-ear cress</name>
    <dbReference type="NCBI Taxonomy" id="3702"/>
    <lineage>
        <taxon>Eukaryota</taxon>
        <taxon>Viridiplantae</taxon>
        <taxon>Streptophyta</taxon>
        <taxon>Embryophyta</taxon>
        <taxon>Tracheophyta</taxon>
        <taxon>Spermatophyta</taxon>
        <taxon>Magnoliopsida</taxon>
        <taxon>eudicotyledons</taxon>
        <taxon>Gunneridae</taxon>
        <taxon>Pentapetalae</taxon>
        <taxon>rosids</taxon>
        <taxon>malvids</taxon>
        <taxon>Brassicales</taxon>
        <taxon>Brassicaceae</taxon>
        <taxon>Camelineae</taxon>
        <taxon>Arabidopsis</taxon>
    </lineage>
</organism>
<accession>Q94A99</accession>
<accession>B9DG13</accession>
<accession>F4JM84</accession>
<accession>O65599</accession>
<dbReference type="EMBL" id="AL022023">
    <property type="protein sequence ID" value="CAA17779.1"/>
    <property type="status" value="ALT_SEQ"/>
    <property type="molecule type" value="Genomic_DNA"/>
</dbReference>
<dbReference type="EMBL" id="AL161586">
    <property type="protein sequence ID" value="CAB80225.1"/>
    <property type="status" value="ALT_SEQ"/>
    <property type="molecule type" value="Genomic_DNA"/>
</dbReference>
<dbReference type="EMBL" id="CP002687">
    <property type="protein sequence ID" value="AEE86459.1"/>
    <property type="molecule type" value="Genomic_DNA"/>
</dbReference>
<dbReference type="EMBL" id="CP002687">
    <property type="protein sequence ID" value="AEE86460.1"/>
    <property type="molecule type" value="Genomic_DNA"/>
</dbReference>
<dbReference type="EMBL" id="AY049256">
    <property type="protein sequence ID" value="AAK83598.1"/>
    <property type="molecule type" value="mRNA"/>
</dbReference>
<dbReference type="EMBL" id="AY090276">
    <property type="protein sequence ID" value="AAL90937.1"/>
    <property type="molecule type" value="mRNA"/>
</dbReference>
<dbReference type="EMBL" id="AK316984">
    <property type="protein sequence ID" value="BAH19680.1"/>
    <property type="molecule type" value="mRNA"/>
</dbReference>
<dbReference type="PIR" id="T05778">
    <property type="entry name" value="T05778"/>
</dbReference>
<dbReference type="RefSeq" id="NP_567976.1">
    <molecule id="Q94A99-1"/>
    <property type="nucleotide sequence ID" value="NM_119674.5"/>
</dbReference>
<dbReference type="RefSeq" id="NP_974685.1">
    <molecule id="Q94A99-2"/>
    <property type="nucleotide sequence ID" value="NM_202956.3"/>
</dbReference>
<dbReference type="FunCoup" id="Q94A99">
    <property type="interactions" value="539"/>
</dbReference>
<dbReference type="IntAct" id="Q94A99">
    <property type="interactions" value="5"/>
</dbReference>
<dbReference type="ProteomicsDB" id="187117"/>
<dbReference type="ProteomicsDB" id="215942"/>
<dbReference type="EnsemblPlants" id="AT4G35080.1">
    <molecule id="Q94A99-1"/>
    <property type="protein sequence ID" value="AT4G35080.1"/>
    <property type="gene ID" value="AT4G35080"/>
</dbReference>
<dbReference type="EnsemblPlants" id="AT4G35080.2">
    <molecule id="Q94A99-2"/>
    <property type="protein sequence ID" value="AT4G35080.2"/>
    <property type="gene ID" value="AT4G35080"/>
</dbReference>
<dbReference type="GeneID" id="829660"/>
<dbReference type="Gramene" id="AT4G35080.1">
    <molecule id="Q94A99-1"/>
    <property type="protein sequence ID" value="AT4G35080.1"/>
    <property type="gene ID" value="AT4G35080"/>
</dbReference>
<dbReference type="Gramene" id="AT4G35080.2">
    <molecule id="Q94A99-2"/>
    <property type="protein sequence ID" value="AT4G35080.2"/>
    <property type="gene ID" value="AT4G35080"/>
</dbReference>
<dbReference type="KEGG" id="ath:AT4G35080"/>
<dbReference type="Araport" id="AT4G35080"/>
<dbReference type="TAIR" id="AT4G35080"/>
<dbReference type="HOGENOM" id="CLU_053247_0_0_1"/>
<dbReference type="OMA" id="SCKYENP"/>
<dbReference type="PRO" id="PR:Q94A99"/>
<dbReference type="Proteomes" id="UP000006548">
    <property type="component" value="Chromosome 4"/>
</dbReference>
<dbReference type="ExpressionAtlas" id="Q94A99">
    <property type="expression patterns" value="baseline and differential"/>
</dbReference>
<dbReference type="GO" id="GO:0009507">
    <property type="term" value="C:chloroplast"/>
    <property type="evidence" value="ECO:0000314"/>
    <property type="project" value="UniProtKB"/>
</dbReference>
<dbReference type="GO" id="GO:0031969">
    <property type="term" value="C:chloroplast membrane"/>
    <property type="evidence" value="ECO:0007669"/>
    <property type="project" value="UniProtKB-SubCell"/>
</dbReference>
<dbReference type="GO" id="GO:0009536">
    <property type="term" value="C:plastid"/>
    <property type="evidence" value="ECO:0000314"/>
    <property type="project" value="UniProtKB"/>
</dbReference>
<dbReference type="GO" id="GO:0009658">
    <property type="term" value="P:chloroplast organization"/>
    <property type="evidence" value="ECO:0000315"/>
    <property type="project" value="UniProtKB"/>
</dbReference>
<dbReference type="GO" id="GO:0048366">
    <property type="term" value="P:leaf development"/>
    <property type="evidence" value="ECO:0000315"/>
    <property type="project" value="UniProtKB"/>
</dbReference>
<dbReference type="GO" id="GO:0048481">
    <property type="term" value="P:plant ovule development"/>
    <property type="evidence" value="ECO:0000315"/>
    <property type="project" value="UniProtKB"/>
</dbReference>
<dbReference type="InterPro" id="IPR052776">
    <property type="entry name" value="Chloro_ReproSupport/MetalTrans"/>
</dbReference>
<dbReference type="InterPro" id="IPR039447">
    <property type="entry name" value="UreH-like_TM_dom"/>
</dbReference>
<dbReference type="PANTHER" id="PTHR33876:SF3">
    <property type="entry name" value="CHLOROPLAST PROTEIN FOR GROWTH AND FERTILITY 1"/>
    <property type="match status" value="1"/>
</dbReference>
<dbReference type="PANTHER" id="PTHR33876">
    <property type="entry name" value="UNNAMED PRODUCT"/>
    <property type="match status" value="1"/>
</dbReference>
<dbReference type="Pfam" id="PF13386">
    <property type="entry name" value="DsbD_2"/>
    <property type="match status" value="1"/>
</dbReference>
<sequence length="365" mass="38527">MERLLQPSSSSSSISPSKFPSRTSPFLPRLRSSGLSFVSTHRPESRRVSSISCNSSQIPSLYTPIGSNTTNNSFNGSPKSDESKPNPGFLTRIATSASEQRKTLSTGTVILISAVAVLLLNPLLAPPAFASFQTAAKSGWLTSAWTGFLAGCLHTLSGPDHLAALAPLSIGRSKMESAAVGALWGCGHDAGQVIFGLLFLLLKDRLHIEVLQTWGTRIVGLTLVIIGAMGIKEASEIPEPCVALETDISMVSTEKEALPLPKKKKIGFATFATGVVHGLQPDALMIVLPALALPSRLAGSAFLIMFLVGTVIAMGSYTAFIGSCSEALKEKVPRITEKLTWVSSLVAIGLGLGIVISPFFGFSLY</sequence>